<keyword id="KW-0028">Amino-acid biosynthesis</keyword>
<keyword id="KW-0963">Cytoplasm</keyword>
<keyword id="KW-0554">One-carbon metabolism</keyword>
<keyword id="KW-0663">Pyridoxal phosphate</keyword>
<keyword id="KW-0808">Transferase</keyword>
<proteinExistence type="inferred from homology"/>
<gene>
    <name evidence="1" type="primary">glyA</name>
    <name type="ordered locus">COXBURSA331_A1580</name>
</gene>
<protein>
    <recommendedName>
        <fullName evidence="1">Serine hydroxymethyltransferase</fullName>
        <shortName evidence="1">SHMT</shortName>
        <shortName evidence="1">Serine methylase</shortName>
        <ecNumber evidence="1">2.1.2.1</ecNumber>
    </recommendedName>
</protein>
<name>GLYA_COXBR</name>
<sequence>MYEPTLTVESFDSELAGAIRDERRRQEHHVELIASENYVSPRVLELQGSVLTNKYAEGYPGRRYYGGCEFVDIAEQLAIDRAKELFVADYANVQPHSGSQANAEAYMALMNPGDTLLAMDLSHGGHLTHGSPVSFSGKFYKAVHYGLNAHGDIDYEQAAQLAQEHKPKVILAGFSAFSGIVDWQRFREIADSVNAYFMTDIAHVAGLVAAGVYPSPVQIADVTTTTTHKTLRGPRAGLILAKANPELEKRLNSAVFPGSQGGPLMHIIAAKAVAFKEAMQPEFKTYAQQILKNAKAMAEVMKERGYTIVSGGTQNHLFLVSLLDKNISGKEAEAALGRANITVNKNTVPGETRSPFVTSGLRIGTPAITTRGFKEKEASQLAHWVCDILDDIHNEKVIADVKQKAHELCGKFPVYQELD</sequence>
<reference key="1">
    <citation type="submission" date="2007-11" db="EMBL/GenBank/DDBJ databases">
        <title>Genome sequencing of phylogenetically and phenotypically diverse Coxiella burnetii isolates.</title>
        <authorList>
            <person name="Seshadri R."/>
            <person name="Samuel J.E."/>
        </authorList>
    </citation>
    <scope>NUCLEOTIDE SEQUENCE [LARGE SCALE GENOMIC DNA]</scope>
    <source>
        <strain>RSA 331 / Henzerling II</strain>
    </source>
</reference>
<dbReference type="EC" id="2.1.2.1" evidence="1"/>
<dbReference type="EMBL" id="CP000890">
    <property type="protein sequence ID" value="ABX79032.1"/>
    <property type="molecule type" value="Genomic_DNA"/>
</dbReference>
<dbReference type="RefSeq" id="WP_012220649.1">
    <property type="nucleotide sequence ID" value="NC_010117.1"/>
</dbReference>
<dbReference type="SMR" id="A9N8T8"/>
<dbReference type="KEGG" id="cbs:COXBURSA331_A1580"/>
<dbReference type="HOGENOM" id="CLU_022477_2_1_6"/>
<dbReference type="UniPathway" id="UPA00193"/>
<dbReference type="UniPathway" id="UPA00288">
    <property type="reaction ID" value="UER01023"/>
</dbReference>
<dbReference type="GO" id="GO:0005829">
    <property type="term" value="C:cytosol"/>
    <property type="evidence" value="ECO:0007669"/>
    <property type="project" value="TreeGrafter"/>
</dbReference>
<dbReference type="GO" id="GO:0004372">
    <property type="term" value="F:glycine hydroxymethyltransferase activity"/>
    <property type="evidence" value="ECO:0007669"/>
    <property type="project" value="UniProtKB-UniRule"/>
</dbReference>
<dbReference type="GO" id="GO:0030170">
    <property type="term" value="F:pyridoxal phosphate binding"/>
    <property type="evidence" value="ECO:0007669"/>
    <property type="project" value="UniProtKB-UniRule"/>
</dbReference>
<dbReference type="GO" id="GO:0019264">
    <property type="term" value="P:glycine biosynthetic process from serine"/>
    <property type="evidence" value="ECO:0007669"/>
    <property type="project" value="UniProtKB-UniRule"/>
</dbReference>
<dbReference type="GO" id="GO:0035999">
    <property type="term" value="P:tetrahydrofolate interconversion"/>
    <property type="evidence" value="ECO:0007669"/>
    <property type="project" value="UniProtKB-UniRule"/>
</dbReference>
<dbReference type="CDD" id="cd00378">
    <property type="entry name" value="SHMT"/>
    <property type="match status" value="1"/>
</dbReference>
<dbReference type="FunFam" id="3.40.640.10:FF:000001">
    <property type="entry name" value="Serine hydroxymethyltransferase"/>
    <property type="match status" value="1"/>
</dbReference>
<dbReference type="FunFam" id="3.90.1150.10:FF:000003">
    <property type="entry name" value="Serine hydroxymethyltransferase"/>
    <property type="match status" value="1"/>
</dbReference>
<dbReference type="Gene3D" id="3.90.1150.10">
    <property type="entry name" value="Aspartate Aminotransferase, domain 1"/>
    <property type="match status" value="1"/>
</dbReference>
<dbReference type="Gene3D" id="3.40.640.10">
    <property type="entry name" value="Type I PLP-dependent aspartate aminotransferase-like (Major domain)"/>
    <property type="match status" value="1"/>
</dbReference>
<dbReference type="HAMAP" id="MF_00051">
    <property type="entry name" value="SHMT"/>
    <property type="match status" value="1"/>
</dbReference>
<dbReference type="InterPro" id="IPR015424">
    <property type="entry name" value="PyrdxlP-dep_Trfase"/>
</dbReference>
<dbReference type="InterPro" id="IPR015421">
    <property type="entry name" value="PyrdxlP-dep_Trfase_major"/>
</dbReference>
<dbReference type="InterPro" id="IPR015422">
    <property type="entry name" value="PyrdxlP-dep_Trfase_small"/>
</dbReference>
<dbReference type="InterPro" id="IPR001085">
    <property type="entry name" value="Ser_HO-MeTrfase"/>
</dbReference>
<dbReference type="InterPro" id="IPR049943">
    <property type="entry name" value="Ser_HO-MeTrfase-like"/>
</dbReference>
<dbReference type="InterPro" id="IPR019798">
    <property type="entry name" value="Ser_HO-MeTrfase_PLP_BS"/>
</dbReference>
<dbReference type="InterPro" id="IPR039429">
    <property type="entry name" value="SHMT-like_dom"/>
</dbReference>
<dbReference type="NCBIfam" id="NF000586">
    <property type="entry name" value="PRK00011.1"/>
    <property type="match status" value="1"/>
</dbReference>
<dbReference type="PANTHER" id="PTHR11680">
    <property type="entry name" value="SERINE HYDROXYMETHYLTRANSFERASE"/>
    <property type="match status" value="1"/>
</dbReference>
<dbReference type="PANTHER" id="PTHR11680:SF50">
    <property type="entry name" value="SERINE HYDROXYMETHYLTRANSFERASE"/>
    <property type="match status" value="1"/>
</dbReference>
<dbReference type="Pfam" id="PF00464">
    <property type="entry name" value="SHMT"/>
    <property type="match status" value="1"/>
</dbReference>
<dbReference type="PIRSF" id="PIRSF000412">
    <property type="entry name" value="SHMT"/>
    <property type="match status" value="1"/>
</dbReference>
<dbReference type="SUPFAM" id="SSF53383">
    <property type="entry name" value="PLP-dependent transferases"/>
    <property type="match status" value="1"/>
</dbReference>
<dbReference type="PROSITE" id="PS00096">
    <property type="entry name" value="SHMT"/>
    <property type="match status" value="1"/>
</dbReference>
<feature type="chain" id="PRO_1000074893" description="Serine hydroxymethyltransferase">
    <location>
        <begin position="1"/>
        <end position="419"/>
    </location>
</feature>
<feature type="binding site" evidence="1">
    <location>
        <position position="121"/>
    </location>
    <ligand>
        <name>(6S)-5,6,7,8-tetrahydrofolate</name>
        <dbReference type="ChEBI" id="CHEBI:57453"/>
    </ligand>
</feature>
<feature type="binding site" evidence="1">
    <location>
        <begin position="125"/>
        <end position="127"/>
    </location>
    <ligand>
        <name>(6S)-5,6,7,8-tetrahydrofolate</name>
        <dbReference type="ChEBI" id="CHEBI:57453"/>
    </ligand>
</feature>
<feature type="binding site" evidence="1">
    <location>
        <begin position="354"/>
        <end position="356"/>
    </location>
    <ligand>
        <name>(6S)-5,6,7,8-tetrahydrofolate</name>
        <dbReference type="ChEBI" id="CHEBI:57453"/>
    </ligand>
</feature>
<feature type="site" description="Plays an important role in substrate specificity" evidence="1">
    <location>
        <position position="228"/>
    </location>
</feature>
<feature type="modified residue" description="N6-(pyridoxal phosphate)lysine" evidence="1">
    <location>
        <position position="229"/>
    </location>
</feature>
<evidence type="ECO:0000255" key="1">
    <source>
        <dbReference type="HAMAP-Rule" id="MF_00051"/>
    </source>
</evidence>
<organism>
    <name type="scientific">Coxiella burnetii (strain RSA 331 / Henzerling II)</name>
    <dbReference type="NCBI Taxonomy" id="360115"/>
    <lineage>
        <taxon>Bacteria</taxon>
        <taxon>Pseudomonadati</taxon>
        <taxon>Pseudomonadota</taxon>
        <taxon>Gammaproteobacteria</taxon>
        <taxon>Legionellales</taxon>
        <taxon>Coxiellaceae</taxon>
        <taxon>Coxiella</taxon>
    </lineage>
</organism>
<comment type="function">
    <text evidence="1">Catalyzes the reversible interconversion of serine and glycine with tetrahydrofolate (THF) serving as the one-carbon carrier. This reaction serves as the major source of one-carbon groups required for the biosynthesis of purines, thymidylate, methionine, and other important biomolecules. Also exhibits THF-independent aldolase activity toward beta-hydroxyamino acids, producing glycine and aldehydes, via a retro-aldol mechanism.</text>
</comment>
<comment type="catalytic activity">
    <reaction evidence="1">
        <text>(6R)-5,10-methylene-5,6,7,8-tetrahydrofolate + glycine + H2O = (6S)-5,6,7,8-tetrahydrofolate + L-serine</text>
        <dbReference type="Rhea" id="RHEA:15481"/>
        <dbReference type="ChEBI" id="CHEBI:15377"/>
        <dbReference type="ChEBI" id="CHEBI:15636"/>
        <dbReference type="ChEBI" id="CHEBI:33384"/>
        <dbReference type="ChEBI" id="CHEBI:57305"/>
        <dbReference type="ChEBI" id="CHEBI:57453"/>
        <dbReference type="EC" id="2.1.2.1"/>
    </reaction>
</comment>
<comment type="cofactor">
    <cofactor evidence="1">
        <name>pyridoxal 5'-phosphate</name>
        <dbReference type="ChEBI" id="CHEBI:597326"/>
    </cofactor>
</comment>
<comment type="pathway">
    <text evidence="1">One-carbon metabolism; tetrahydrofolate interconversion.</text>
</comment>
<comment type="pathway">
    <text evidence="1">Amino-acid biosynthesis; glycine biosynthesis; glycine from L-serine: step 1/1.</text>
</comment>
<comment type="subunit">
    <text evidence="1">Homodimer.</text>
</comment>
<comment type="subcellular location">
    <subcellularLocation>
        <location evidence="1">Cytoplasm</location>
    </subcellularLocation>
</comment>
<comment type="similarity">
    <text evidence="1">Belongs to the SHMT family.</text>
</comment>
<accession>A9N8T8</accession>